<accession>Q043F6</accession>
<reference key="1">
    <citation type="journal article" date="2006" name="Proc. Natl. Acad. Sci. U.S.A.">
        <title>Comparative genomics of the lactic acid bacteria.</title>
        <authorList>
            <person name="Makarova K.S."/>
            <person name="Slesarev A."/>
            <person name="Wolf Y.I."/>
            <person name="Sorokin A."/>
            <person name="Mirkin B."/>
            <person name="Koonin E.V."/>
            <person name="Pavlov A."/>
            <person name="Pavlova N."/>
            <person name="Karamychev V."/>
            <person name="Polouchine N."/>
            <person name="Shakhova V."/>
            <person name="Grigoriev I."/>
            <person name="Lou Y."/>
            <person name="Rohksar D."/>
            <person name="Lucas S."/>
            <person name="Huang K."/>
            <person name="Goodstein D.M."/>
            <person name="Hawkins T."/>
            <person name="Plengvidhya V."/>
            <person name="Welker D."/>
            <person name="Hughes J."/>
            <person name="Goh Y."/>
            <person name="Benson A."/>
            <person name="Baldwin K."/>
            <person name="Lee J.-H."/>
            <person name="Diaz-Muniz I."/>
            <person name="Dosti B."/>
            <person name="Smeianov V."/>
            <person name="Wechter W."/>
            <person name="Barabote R."/>
            <person name="Lorca G."/>
            <person name="Altermann E."/>
            <person name="Barrangou R."/>
            <person name="Ganesan B."/>
            <person name="Xie Y."/>
            <person name="Rawsthorne H."/>
            <person name="Tamir D."/>
            <person name="Parker C."/>
            <person name="Breidt F."/>
            <person name="Broadbent J.R."/>
            <person name="Hutkins R."/>
            <person name="O'Sullivan D."/>
            <person name="Steele J."/>
            <person name="Unlu G."/>
            <person name="Saier M.H. Jr."/>
            <person name="Klaenhammer T."/>
            <person name="Richardson P."/>
            <person name="Kozyavkin S."/>
            <person name="Weimer B.C."/>
            <person name="Mills D.A."/>
        </authorList>
    </citation>
    <scope>NUCLEOTIDE SEQUENCE [LARGE SCALE GENOMIC DNA]</scope>
    <source>
        <strain>ATCC 33323 / DSM 20243 / BCRC 14619 / CIP 102991 / JCM 1131 / KCTC 3163 / NCIMB 11718 / NCTC 13722 / AM63</strain>
    </source>
</reference>
<evidence type="ECO:0000255" key="1">
    <source>
        <dbReference type="HAMAP-Rule" id="MF_01661"/>
    </source>
</evidence>
<comment type="function">
    <text evidence="1">Catalyzes the interconversion of beta-pyran and beta-furan forms of D-ribose.</text>
</comment>
<comment type="catalytic activity">
    <reaction evidence="1">
        <text>beta-D-ribopyranose = beta-D-ribofuranose</text>
        <dbReference type="Rhea" id="RHEA:25432"/>
        <dbReference type="ChEBI" id="CHEBI:27476"/>
        <dbReference type="ChEBI" id="CHEBI:47002"/>
        <dbReference type="EC" id="5.4.99.62"/>
    </reaction>
</comment>
<comment type="pathway">
    <text evidence="1">Carbohydrate metabolism; D-ribose degradation; D-ribose 5-phosphate from beta-D-ribopyranose: step 1/2.</text>
</comment>
<comment type="subunit">
    <text evidence="1">Homodecamer.</text>
</comment>
<comment type="subcellular location">
    <subcellularLocation>
        <location evidence="1">Cytoplasm</location>
    </subcellularLocation>
</comment>
<comment type="similarity">
    <text evidence="1">Belongs to the RbsD / FucU family. RbsD subfamily.</text>
</comment>
<protein>
    <recommendedName>
        <fullName evidence="1">D-ribose pyranase</fullName>
        <ecNumber evidence="1">5.4.99.62</ecNumber>
    </recommendedName>
</protein>
<name>RBSD_LACGA</name>
<feature type="chain" id="PRO_0000346218" description="D-ribose pyranase">
    <location>
        <begin position="1"/>
        <end position="131"/>
    </location>
</feature>
<feature type="active site" description="Proton donor" evidence="1">
    <location>
        <position position="20"/>
    </location>
</feature>
<feature type="binding site" evidence="1">
    <location>
        <position position="28"/>
    </location>
    <ligand>
        <name>substrate</name>
    </ligand>
</feature>
<feature type="binding site" evidence="1">
    <location>
        <position position="98"/>
    </location>
    <ligand>
        <name>substrate</name>
    </ligand>
</feature>
<feature type="binding site" evidence="1">
    <location>
        <begin position="120"/>
        <end position="122"/>
    </location>
    <ligand>
        <name>substrate</name>
    </ligand>
</feature>
<gene>
    <name evidence="1" type="primary">rbsD</name>
    <name type="ordered locus">LGAS_1041</name>
</gene>
<dbReference type="EC" id="5.4.99.62" evidence="1"/>
<dbReference type="EMBL" id="CP000413">
    <property type="protein sequence ID" value="ABJ60416.1"/>
    <property type="molecule type" value="Genomic_DNA"/>
</dbReference>
<dbReference type="RefSeq" id="WP_003647263.1">
    <property type="nucleotide sequence ID" value="NZ_WBMG01000008.1"/>
</dbReference>
<dbReference type="SMR" id="Q043F6"/>
<dbReference type="GeneID" id="29638676"/>
<dbReference type="KEGG" id="lga:LGAS_1041"/>
<dbReference type="HOGENOM" id="CLU_135498_0_0_9"/>
<dbReference type="BioCyc" id="LGAS324831:G1G6Y-1041-MONOMER"/>
<dbReference type="UniPathway" id="UPA00916">
    <property type="reaction ID" value="UER00888"/>
</dbReference>
<dbReference type="Proteomes" id="UP000000664">
    <property type="component" value="Chromosome"/>
</dbReference>
<dbReference type="GO" id="GO:0005829">
    <property type="term" value="C:cytosol"/>
    <property type="evidence" value="ECO:0007669"/>
    <property type="project" value="TreeGrafter"/>
</dbReference>
<dbReference type="GO" id="GO:0062193">
    <property type="term" value="F:D-ribose pyranase activity"/>
    <property type="evidence" value="ECO:0007669"/>
    <property type="project" value="UniProtKB-EC"/>
</dbReference>
<dbReference type="GO" id="GO:0016872">
    <property type="term" value="F:intramolecular lyase activity"/>
    <property type="evidence" value="ECO:0007669"/>
    <property type="project" value="UniProtKB-UniRule"/>
</dbReference>
<dbReference type="GO" id="GO:0048029">
    <property type="term" value="F:monosaccharide binding"/>
    <property type="evidence" value="ECO:0007669"/>
    <property type="project" value="InterPro"/>
</dbReference>
<dbReference type="GO" id="GO:0019303">
    <property type="term" value="P:D-ribose catabolic process"/>
    <property type="evidence" value="ECO:0007669"/>
    <property type="project" value="UniProtKB-UniRule"/>
</dbReference>
<dbReference type="FunFam" id="3.40.1650.10:FF:000004">
    <property type="entry name" value="D-ribose pyranase"/>
    <property type="match status" value="1"/>
</dbReference>
<dbReference type="Gene3D" id="3.40.1650.10">
    <property type="entry name" value="RbsD-like domain"/>
    <property type="match status" value="1"/>
</dbReference>
<dbReference type="HAMAP" id="MF_01661">
    <property type="entry name" value="D_rib_pyranase"/>
    <property type="match status" value="1"/>
</dbReference>
<dbReference type="InterPro" id="IPR023064">
    <property type="entry name" value="D-ribose_pyranase"/>
</dbReference>
<dbReference type="InterPro" id="IPR023750">
    <property type="entry name" value="RbsD-like_sf"/>
</dbReference>
<dbReference type="InterPro" id="IPR007721">
    <property type="entry name" value="RbsD_FucU"/>
</dbReference>
<dbReference type="NCBIfam" id="NF008761">
    <property type="entry name" value="PRK11797.1"/>
    <property type="match status" value="1"/>
</dbReference>
<dbReference type="PANTHER" id="PTHR37831">
    <property type="entry name" value="D-RIBOSE PYRANASE"/>
    <property type="match status" value="1"/>
</dbReference>
<dbReference type="PANTHER" id="PTHR37831:SF1">
    <property type="entry name" value="D-RIBOSE PYRANASE"/>
    <property type="match status" value="1"/>
</dbReference>
<dbReference type="Pfam" id="PF05025">
    <property type="entry name" value="RbsD_FucU"/>
    <property type="match status" value="1"/>
</dbReference>
<dbReference type="SUPFAM" id="SSF102546">
    <property type="entry name" value="RbsD-like"/>
    <property type="match status" value="1"/>
</dbReference>
<proteinExistence type="inferred from homology"/>
<keyword id="KW-0119">Carbohydrate metabolism</keyword>
<keyword id="KW-0963">Cytoplasm</keyword>
<keyword id="KW-0413">Isomerase</keyword>
<sequence>MKKTGVMNSNISRVIADMGHMDWLGVGDAGTPVPAETEKIDLSVRPGLPSFIDVLEEVLKELEVQKIYIAEEIKTENPKQLEAIKKTLPNVEIEFIPHSELKKDLKTSKAFIRTGEETPYSNVILESGVTF</sequence>
<organism>
    <name type="scientific">Lactobacillus gasseri (strain ATCC 33323 / DSM 20243 / BCRC 14619 / CIP 102991 / JCM 1131 / KCTC 3163 / NCIMB 11718 / NCTC 13722 / AM63)</name>
    <dbReference type="NCBI Taxonomy" id="324831"/>
    <lineage>
        <taxon>Bacteria</taxon>
        <taxon>Bacillati</taxon>
        <taxon>Bacillota</taxon>
        <taxon>Bacilli</taxon>
        <taxon>Lactobacillales</taxon>
        <taxon>Lactobacillaceae</taxon>
        <taxon>Lactobacillus</taxon>
    </lineage>
</organism>